<feature type="chain" id="PRO_1000050600" description="Glycerol-1-phosphate dehydrogenase [NAD(P)+]">
    <location>
        <begin position="1"/>
        <end position="352"/>
    </location>
</feature>
<feature type="binding site" evidence="1">
    <location>
        <begin position="98"/>
        <end position="102"/>
    </location>
    <ligand>
        <name>NAD(+)</name>
        <dbReference type="ChEBI" id="CHEBI:57540"/>
    </ligand>
</feature>
<feature type="binding site" evidence="1">
    <location>
        <begin position="120"/>
        <end position="123"/>
    </location>
    <ligand>
        <name>NAD(+)</name>
        <dbReference type="ChEBI" id="CHEBI:57540"/>
    </ligand>
</feature>
<feature type="binding site" evidence="1">
    <location>
        <position position="125"/>
    </location>
    <ligand>
        <name>substrate</name>
    </ligand>
</feature>
<feature type="binding site" evidence="1">
    <location>
        <position position="129"/>
    </location>
    <ligand>
        <name>NAD(+)</name>
        <dbReference type="ChEBI" id="CHEBI:57540"/>
    </ligand>
</feature>
<feature type="binding site" evidence="1">
    <location>
        <position position="172"/>
    </location>
    <ligand>
        <name>substrate</name>
    </ligand>
</feature>
<feature type="binding site" evidence="1">
    <location>
        <position position="172"/>
    </location>
    <ligand>
        <name>Zn(2+)</name>
        <dbReference type="ChEBI" id="CHEBI:29105"/>
        <note>catalytic</note>
    </ligand>
</feature>
<feature type="binding site" evidence="1">
    <location>
        <position position="252"/>
    </location>
    <ligand>
        <name>Zn(2+)</name>
        <dbReference type="ChEBI" id="CHEBI:29105"/>
        <note>catalytic</note>
    </ligand>
</feature>
<feature type="binding site" evidence="1">
    <location>
        <position position="256"/>
    </location>
    <ligand>
        <name>substrate</name>
    </ligand>
</feature>
<feature type="binding site" evidence="1">
    <location>
        <position position="268"/>
    </location>
    <ligand>
        <name>Zn(2+)</name>
        <dbReference type="ChEBI" id="CHEBI:29105"/>
        <note>catalytic</note>
    </ligand>
</feature>
<accession>Q5V5G2</accession>
<gene>
    <name evidence="1" type="primary">egsA</name>
    <name type="ordered locus">rrnAC0175</name>
</gene>
<proteinExistence type="inferred from homology"/>
<protein>
    <recommendedName>
        <fullName evidence="1">Glycerol-1-phosphate dehydrogenase [NAD(P)+]</fullName>
        <shortName evidence="1">G1P dehydrogenase</shortName>
        <shortName evidence="1">G1PDH</shortName>
        <ecNumber evidence="1">1.1.1.261</ecNumber>
    </recommendedName>
    <alternativeName>
        <fullName evidence="1">Enantiomeric glycerophosphate synthase</fullName>
    </alternativeName>
    <alternativeName>
        <fullName evidence="1">sn-glycerol-1-phosphate dehydrogenase</fullName>
    </alternativeName>
</protein>
<organism>
    <name type="scientific">Haloarcula marismortui (strain ATCC 43049 / DSM 3752 / JCM 8966 / VKM B-1809)</name>
    <name type="common">Halobacterium marismortui</name>
    <dbReference type="NCBI Taxonomy" id="272569"/>
    <lineage>
        <taxon>Archaea</taxon>
        <taxon>Methanobacteriati</taxon>
        <taxon>Methanobacteriota</taxon>
        <taxon>Stenosarchaea group</taxon>
        <taxon>Halobacteria</taxon>
        <taxon>Halobacteriales</taxon>
        <taxon>Haloarculaceae</taxon>
        <taxon>Haloarcula</taxon>
    </lineage>
</organism>
<sequence>MFEKRTWIRLPRNVVVGHGVLGQTIEAVSELHLTGRPLVVSSPTPHDVAGKQVVAQFEDEGYDPSEIVIEEASFDAVQQVIDHASDIDAGFLLGVGGGKAIDITKMAADDLGLGFVSVPTAASHDGIVSGRGSVPEGDTRHSVAAEPPLAVIADTEVLAEAPWRLTTAGCADIISNYTAVRDWQLAHRLKNVHYSEYAGALSQMTAEMLVESADSIKQGLEESSWIVVKALVSSGVAMSIADSSRPASGAEHLFSHQLDRLVPDGALHGHQVGVGSIMTEYLHSGQKGKWRDARDALAAIGAPTTADELGIDDETVIEALTTAHQIRDRYTVLGDGMSEEAAIEAATVTGVI</sequence>
<reference key="1">
    <citation type="journal article" date="2004" name="Genome Res.">
        <title>Genome sequence of Haloarcula marismortui: a halophilic archaeon from the Dead Sea.</title>
        <authorList>
            <person name="Baliga N.S."/>
            <person name="Bonneau R."/>
            <person name="Facciotti M.T."/>
            <person name="Pan M."/>
            <person name="Glusman G."/>
            <person name="Deutsch E.W."/>
            <person name="Shannon P."/>
            <person name="Chiu Y."/>
            <person name="Weng R.S."/>
            <person name="Gan R.R."/>
            <person name="Hung P."/>
            <person name="Date S.V."/>
            <person name="Marcotte E."/>
            <person name="Hood L."/>
            <person name="Ng W.V."/>
        </authorList>
    </citation>
    <scope>NUCLEOTIDE SEQUENCE [LARGE SCALE GENOMIC DNA]</scope>
    <source>
        <strain>ATCC 43049 / DSM 3752 / JCM 8966 / VKM B-1809</strain>
    </source>
</reference>
<evidence type="ECO:0000255" key="1">
    <source>
        <dbReference type="HAMAP-Rule" id="MF_00497"/>
    </source>
</evidence>
<name>G1PDH_HALMA</name>
<comment type="function">
    <text evidence="1">Catalyzes the NAD(P)H-dependent reduction of dihydroxyacetonephosphate (DHAP or glycerone phosphate) to glycerol 1-phosphate (G1P). The G1P thus generated is used as the glycerophosphate backbone of phospholipids in the cellular membranes of Archaea.</text>
</comment>
<comment type="catalytic activity">
    <reaction evidence="1">
        <text>sn-glycerol 1-phosphate + NAD(+) = dihydroxyacetone phosphate + NADH + H(+)</text>
        <dbReference type="Rhea" id="RHEA:21412"/>
        <dbReference type="ChEBI" id="CHEBI:15378"/>
        <dbReference type="ChEBI" id="CHEBI:57540"/>
        <dbReference type="ChEBI" id="CHEBI:57642"/>
        <dbReference type="ChEBI" id="CHEBI:57685"/>
        <dbReference type="ChEBI" id="CHEBI:57945"/>
        <dbReference type="EC" id="1.1.1.261"/>
    </reaction>
</comment>
<comment type="catalytic activity">
    <reaction evidence="1">
        <text>sn-glycerol 1-phosphate + NADP(+) = dihydroxyacetone phosphate + NADPH + H(+)</text>
        <dbReference type="Rhea" id="RHEA:21416"/>
        <dbReference type="ChEBI" id="CHEBI:15378"/>
        <dbReference type="ChEBI" id="CHEBI:57642"/>
        <dbReference type="ChEBI" id="CHEBI:57685"/>
        <dbReference type="ChEBI" id="CHEBI:57783"/>
        <dbReference type="ChEBI" id="CHEBI:58349"/>
        <dbReference type="EC" id="1.1.1.261"/>
    </reaction>
</comment>
<comment type="cofactor">
    <cofactor evidence="1">
        <name>Zn(2+)</name>
        <dbReference type="ChEBI" id="CHEBI:29105"/>
    </cofactor>
    <text evidence="1">Binds 1 zinc ion per subunit.</text>
</comment>
<comment type="pathway">
    <text evidence="1">Membrane lipid metabolism; glycerophospholipid metabolism.</text>
</comment>
<comment type="subcellular location">
    <subcellularLocation>
        <location evidence="1">Cytoplasm</location>
    </subcellularLocation>
</comment>
<comment type="similarity">
    <text evidence="1">Belongs to the glycerol-1-phosphate dehydrogenase family.</text>
</comment>
<keyword id="KW-0963">Cytoplasm</keyword>
<keyword id="KW-0444">Lipid biosynthesis</keyword>
<keyword id="KW-0443">Lipid metabolism</keyword>
<keyword id="KW-0479">Metal-binding</keyword>
<keyword id="KW-0520">NAD</keyword>
<keyword id="KW-0521">NADP</keyword>
<keyword id="KW-0560">Oxidoreductase</keyword>
<keyword id="KW-0594">Phospholipid biosynthesis</keyword>
<keyword id="KW-1208">Phospholipid metabolism</keyword>
<keyword id="KW-1185">Reference proteome</keyword>
<keyword id="KW-0862">Zinc</keyword>
<dbReference type="EC" id="1.1.1.261" evidence="1"/>
<dbReference type="EMBL" id="AY596297">
    <property type="protein sequence ID" value="AAV45240.1"/>
    <property type="molecule type" value="Genomic_DNA"/>
</dbReference>
<dbReference type="RefSeq" id="WP_011222867.1">
    <property type="nucleotide sequence ID" value="NC_006396.1"/>
</dbReference>
<dbReference type="SMR" id="Q5V5G2"/>
<dbReference type="STRING" id="272569.rrnAC0175"/>
<dbReference type="PaxDb" id="272569-rrnAC0175"/>
<dbReference type="EnsemblBacteria" id="AAV45240">
    <property type="protein sequence ID" value="AAV45240"/>
    <property type="gene ID" value="rrnAC0175"/>
</dbReference>
<dbReference type="GeneID" id="25156585"/>
<dbReference type="KEGG" id="hma:rrnAC0175"/>
<dbReference type="PATRIC" id="fig|272569.17.peg.972"/>
<dbReference type="eggNOG" id="arCOG00982">
    <property type="taxonomic scope" value="Archaea"/>
</dbReference>
<dbReference type="HOGENOM" id="CLU_038362_0_0_2"/>
<dbReference type="UniPathway" id="UPA00940"/>
<dbReference type="Proteomes" id="UP000001169">
    <property type="component" value="Chromosome I"/>
</dbReference>
<dbReference type="GO" id="GO:0005737">
    <property type="term" value="C:cytoplasm"/>
    <property type="evidence" value="ECO:0007669"/>
    <property type="project" value="UniProtKB-SubCell"/>
</dbReference>
<dbReference type="GO" id="GO:0106357">
    <property type="term" value="F:glycerol-1-phosphate dehydrogenase (NAD+) activity"/>
    <property type="evidence" value="ECO:0007669"/>
    <property type="project" value="RHEA"/>
</dbReference>
<dbReference type="GO" id="GO:0106358">
    <property type="term" value="F:glycerol-1-phosphate dehydrogenase (NADP+) activity"/>
    <property type="evidence" value="ECO:0007669"/>
    <property type="project" value="RHEA"/>
</dbReference>
<dbReference type="GO" id="GO:0046872">
    <property type="term" value="F:metal ion binding"/>
    <property type="evidence" value="ECO:0007669"/>
    <property type="project" value="UniProtKB-KW"/>
</dbReference>
<dbReference type="GO" id="GO:0006650">
    <property type="term" value="P:glycerophospholipid metabolic process"/>
    <property type="evidence" value="ECO:0007669"/>
    <property type="project" value="UniProtKB-UniRule"/>
</dbReference>
<dbReference type="GO" id="GO:0008654">
    <property type="term" value="P:phospholipid biosynthetic process"/>
    <property type="evidence" value="ECO:0007669"/>
    <property type="project" value="UniProtKB-KW"/>
</dbReference>
<dbReference type="CDD" id="cd08173">
    <property type="entry name" value="Gro1PDH"/>
    <property type="match status" value="1"/>
</dbReference>
<dbReference type="Gene3D" id="3.40.50.1970">
    <property type="match status" value="1"/>
</dbReference>
<dbReference type="Gene3D" id="1.20.1090.10">
    <property type="entry name" value="Dehydroquinate synthase-like - alpha domain"/>
    <property type="match status" value="1"/>
</dbReference>
<dbReference type="HAMAP" id="MF_00497_A">
    <property type="entry name" value="G1P_dehydrogenase_A"/>
    <property type="match status" value="1"/>
</dbReference>
<dbReference type="InterPro" id="IPR023002">
    <property type="entry name" value="G1P_dehydrogenase_arc"/>
</dbReference>
<dbReference type="InterPro" id="IPR032837">
    <property type="entry name" value="G1PDH"/>
</dbReference>
<dbReference type="InterPro" id="IPR016205">
    <property type="entry name" value="Glycerol_DH"/>
</dbReference>
<dbReference type="NCBIfam" id="NF002022">
    <property type="entry name" value="PRK00843.1"/>
    <property type="match status" value="1"/>
</dbReference>
<dbReference type="PANTHER" id="PTHR43616">
    <property type="entry name" value="GLYCEROL DEHYDROGENASE"/>
    <property type="match status" value="1"/>
</dbReference>
<dbReference type="PANTHER" id="PTHR43616:SF5">
    <property type="entry name" value="GLYCEROL DEHYDROGENASE 1"/>
    <property type="match status" value="1"/>
</dbReference>
<dbReference type="Pfam" id="PF13685">
    <property type="entry name" value="Fe-ADH_2"/>
    <property type="match status" value="1"/>
</dbReference>
<dbReference type="PIRSF" id="PIRSF000112">
    <property type="entry name" value="Glycerol_dehydrogenase"/>
    <property type="match status" value="1"/>
</dbReference>
<dbReference type="SUPFAM" id="SSF56796">
    <property type="entry name" value="Dehydroquinate synthase-like"/>
    <property type="match status" value="1"/>
</dbReference>